<protein>
    <recommendedName>
        <fullName evidence="1">Urease accessory protein UreE</fullName>
    </recommendedName>
</protein>
<comment type="function">
    <text evidence="1">Involved in urease metallocenter assembly. Binds nickel. Probably functions as a nickel donor during metallocenter assembly.</text>
</comment>
<comment type="subcellular location">
    <subcellularLocation>
        <location evidence="1">Cytoplasm</location>
    </subcellularLocation>
</comment>
<comment type="similarity">
    <text evidence="1">Belongs to the UreE family.</text>
</comment>
<sequence>MIVTEILGNIHEDSGRELVAGRHVEKVVLPSAELVKRIQRLRTDHDRQIGLRLPAGAPDLRDGDVVAVEDAAPSGAGHGDGEQDGTGAPGRGNAVVIQVLPTDVLVIGARSVVEMAFVAHSLGNRHLQAQFFDADSEYGAEVMVVQYDHTVQDFLDHHGVPYSRQERVMPVPFRHAEHTH</sequence>
<dbReference type="EMBL" id="AP009152">
    <property type="protein sequence ID" value="BAG30517.1"/>
    <property type="molecule type" value="Genomic_DNA"/>
</dbReference>
<dbReference type="RefSeq" id="WP_012399238.1">
    <property type="nucleotide sequence ID" value="NC_010617.1"/>
</dbReference>
<dbReference type="SMR" id="B2GI05"/>
<dbReference type="STRING" id="378753.KRH_21700"/>
<dbReference type="KEGG" id="krh:KRH_21700"/>
<dbReference type="eggNOG" id="COG2371">
    <property type="taxonomic scope" value="Bacteria"/>
</dbReference>
<dbReference type="HOGENOM" id="CLU_093757_3_1_11"/>
<dbReference type="OrthoDB" id="9810882at2"/>
<dbReference type="Proteomes" id="UP000008838">
    <property type="component" value="Chromosome"/>
</dbReference>
<dbReference type="GO" id="GO:0005737">
    <property type="term" value="C:cytoplasm"/>
    <property type="evidence" value="ECO:0007669"/>
    <property type="project" value="UniProtKB-SubCell"/>
</dbReference>
<dbReference type="GO" id="GO:0016151">
    <property type="term" value="F:nickel cation binding"/>
    <property type="evidence" value="ECO:0007669"/>
    <property type="project" value="UniProtKB-UniRule"/>
</dbReference>
<dbReference type="GO" id="GO:0051082">
    <property type="term" value="F:unfolded protein binding"/>
    <property type="evidence" value="ECO:0007669"/>
    <property type="project" value="UniProtKB-UniRule"/>
</dbReference>
<dbReference type="GO" id="GO:0006457">
    <property type="term" value="P:protein folding"/>
    <property type="evidence" value="ECO:0007669"/>
    <property type="project" value="InterPro"/>
</dbReference>
<dbReference type="GO" id="GO:0065003">
    <property type="term" value="P:protein-containing complex assembly"/>
    <property type="evidence" value="ECO:0007669"/>
    <property type="project" value="InterPro"/>
</dbReference>
<dbReference type="GO" id="GO:0019627">
    <property type="term" value="P:urea metabolic process"/>
    <property type="evidence" value="ECO:0007669"/>
    <property type="project" value="InterPro"/>
</dbReference>
<dbReference type="CDD" id="cd00571">
    <property type="entry name" value="UreE"/>
    <property type="match status" value="1"/>
</dbReference>
<dbReference type="Gene3D" id="2.60.260.20">
    <property type="entry name" value="Urease metallochaperone UreE, N-terminal domain"/>
    <property type="match status" value="1"/>
</dbReference>
<dbReference type="Gene3D" id="3.30.70.790">
    <property type="entry name" value="UreE, C-terminal domain"/>
    <property type="match status" value="1"/>
</dbReference>
<dbReference type="HAMAP" id="MF_00822">
    <property type="entry name" value="UreE"/>
    <property type="match status" value="1"/>
</dbReference>
<dbReference type="InterPro" id="IPR012406">
    <property type="entry name" value="UreE"/>
</dbReference>
<dbReference type="InterPro" id="IPR007864">
    <property type="entry name" value="UreE_C_dom"/>
</dbReference>
<dbReference type="InterPro" id="IPR004029">
    <property type="entry name" value="UreE_N"/>
</dbReference>
<dbReference type="InterPro" id="IPR036118">
    <property type="entry name" value="UreE_N_sf"/>
</dbReference>
<dbReference type="NCBIfam" id="NF009757">
    <property type="entry name" value="PRK13261.2-3"/>
    <property type="match status" value="1"/>
</dbReference>
<dbReference type="Pfam" id="PF05194">
    <property type="entry name" value="UreE_C"/>
    <property type="match status" value="1"/>
</dbReference>
<dbReference type="Pfam" id="PF02814">
    <property type="entry name" value="UreE_N"/>
    <property type="match status" value="1"/>
</dbReference>
<dbReference type="PIRSF" id="PIRSF036402">
    <property type="entry name" value="Ureas_acces_UreE"/>
    <property type="match status" value="1"/>
</dbReference>
<dbReference type="SMART" id="SM00988">
    <property type="entry name" value="UreE_N"/>
    <property type="match status" value="1"/>
</dbReference>
<dbReference type="SUPFAM" id="SSF69737">
    <property type="entry name" value="Urease metallochaperone UreE, C-terminal domain"/>
    <property type="match status" value="1"/>
</dbReference>
<dbReference type="SUPFAM" id="SSF69287">
    <property type="entry name" value="Urease metallochaperone UreE, N-terminal domain"/>
    <property type="match status" value="1"/>
</dbReference>
<reference key="1">
    <citation type="journal article" date="2008" name="J. Bacteriol.">
        <title>Complete genome sequence of the soil actinomycete Kocuria rhizophila.</title>
        <authorList>
            <person name="Takarada H."/>
            <person name="Sekine M."/>
            <person name="Kosugi H."/>
            <person name="Matsuo Y."/>
            <person name="Fujisawa T."/>
            <person name="Omata S."/>
            <person name="Kishi E."/>
            <person name="Shimizu A."/>
            <person name="Tsukatani N."/>
            <person name="Tanikawa S."/>
            <person name="Fujita N."/>
            <person name="Harayama S."/>
        </authorList>
    </citation>
    <scope>NUCLEOTIDE SEQUENCE [LARGE SCALE GENOMIC DNA]</scope>
    <source>
        <strain>ATCC 9341 / DSM 348 / NBRC 103217 / DC2201</strain>
    </source>
</reference>
<keyword id="KW-0143">Chaperone</keyword>
<keyword id="KW-0963">Cytoplasm</keyword>
<keyword id="KW-0533">Nickel</keyword>
<keyword id="KW-1185">Reference proteome</keyword>
<gene>
    <name evidence="1" type="primary">ureE</name>
    <name type="ordered locus">KRH_21700</name>
</gene>
<name>UREE_KOCRD</name>
<evidence type="ECO:0000255" key="1">
    <source>
        <dbReference type="HAMAP-Rule" id="MF_00822"/>
    </source>
</evidence>
<evidence type="ECO:0000256" key="2">
    <source>
        <dbReference type="SAM" id="MobiDB-lite"/>
    </source>
</evidence>
<organism>
    <name type="scientific">Kocuria rhizophila (strain ATCC 9341 / DSM 348 / NBRC 103217 / DC2201)</name>
    <dbReference type="NCBI Taxonomy" id="378753"/>
    <lineage>
        <taxon>Bacteria</taxon>
        <taxon>Bacillati</taxon>
        <taxon>Actinomycetota</taxon>
        <taxon>Actinomycetes</taxon>
        <taxon>Micrococcales</taxon>
        <taxon>Micrococcaceae</taxon>
        <taxon>Kocuria</taxon>
    </lineage>
</organism>
<feature type="chain" id="PRO_1000197441" description="Urease accessory protein UreE">
    <location>
        <begin position="1"/>
        <end position="180"/>
    </location>
</feature>
<feature type="region of interest" description="Disordered" evidence="2">
    <location>
        <begin position="71"/>
        <end position="90"/>
    </location>
</feature>
<accession>B2GI05</accession>
<proteinExistence type="inferred from homology"/>